<comment type="function">
    <text evidence="3">Catalyzes the decomposition of hydrogen peroxide into water and oxygen (PubMed:33737179). No significant activity could be detected with any of the other tested substrates, including glutathione, pyrogallol, NADH, NADPH and o-dianisidine (PubMed:33737179).</text>
</comment>
<comment type="catalytic activity">
    <reaction evidence="3">
        <text>2 H2O2 = O2 + 2 H2O</text>
        <dbReference type="Rhea" id="RHEA:20309"/>
        <dbReference type="ChEBI" id="CHEBI:15377"/>
        <dbReference type="ChEBI" id="CHEBI:15379"/>
        <dbReference type="ChEBI" id="CHEBI:16240"/>
        <dbReference type="EC" id="1.11.1.6"/>
    </reaction>
</comment>
<comment type="cofactor">
    <cofactor evidence="3">
        <name>Ca(2+)</name>
        <dbReference type="ChEBI" id="CHEBI:29108"/>
    </cofactor>
    <text evidence="3">Binds 1 Ca(2+) ion per subunit.</text>
</comment>
<comment type="cofactor">
    <cofactor evidence="3">
        <name>Mn(2+)</name>
        <dbReference type="ChEBI" id="CHEBI:29035"/>
    </cofactor>
    <text evidence="3">Binds 2 manganese ions per subunit.</text>
</comment>
<comment type="activity regulation">
    <text evidence="3">Inhibited in the presence of EDTA (PubMed:33737179). Resistant to inhibition by sodium azide (PubMed:33737179).</text>
</comment>
<comment type="biophysicochemical properties">
    <kinetics>
        <KM evidence="3">98 mM for hydrogen peroxide</KM>
        <Vmax evidence="3">25290.0 umol/min/mg enzyme</Vmax>
        <text evidence="3">kcat is 12700 sec(-1).</text>
    </kinetics>
    <phDependence>
        <text evidence="3">Optimum pH is 8.0.</text>
    </phDependence>
    <temperatureDependence>
        <text evidence="3">Optimum temperature is 55 degrees Celsius (PubMed:33737179). Exhibits a half-life of 2 hours at 80 degrees Celsius.</text>
    </temperatureDependence>
</comment>
<comment type="subunit">
    <text evidence="3">Homohexamer.</text>
</comment>
<comment type="similarity">
    <text evidence="5">Belongs to the manganese catalase family.</text>
</comment>
<evidence type="ECO:0000250" key="1">
    <source>
        <dbReference type="UniProtKB" id="P60355"/>
    </source>
</evidence>
<evidence type="ECO:0000256" key="2">
    <source>
        <dbReference type="SAM" id="MobiDB-lite"/>
    </source>
</evidence>
<evidence type="ECO:0000269" key="3">
    <source>
    </source>
</evidence>
<evidence type="ECO:0000303" key="4">
    <source>
    </source>
</evidence>
<evidence type="ECO:0000305" key="5"/>
<reference key="1">
    <citation type="journal article" date="2021" name="Int. J. Biol. Macromol.">
        <title>Structural and functional analyses of a novel manganese-catalase from Bacillus subtilis R5.</title>
        <authorList>
            <person name="Shaeer A."/>
            <person name="Aslam M."/>
            <person name="Rashid N."/>
        </authorList>
    </citation>
    <scope>NUCLEOTIDE SEQUENCE [GENOMIC DNA]</scope>
    <scope>FUNCTION</scope>
    <scope>CATALYTIC ACTIVITY</scope>
    <scope>COFACTOR</scope>
    <scope>ACTIVITY REGULATION</scope>
    <scope>BIOPHYSICOCHEMICAL PROPERTIES</scope>
    <scope>SUBUNIT</scope>
    <source>
        <strain>R5</strain>
    </source>
</reference>
<protein>
    <recommendedName>
        <fullName evidence="4">Manganese catalase</fullName>
        <ecNumber evidence="3">1.11.1.6</ecNumber>
    </recommendedName>
</protein>
<feature type="chain" id="PRO_0000457366" description="Manganese catalase">
    <location>
        <begin position="1"/>
        <end position="273"/>
    </location>
</feature>
<feature type="region of interest" description="Disordered" evidence="2">
    <location>
        <begin position="254"/>
        <end position="273"/>
    </location>
</feature>
<feature type="binding site" evidence="1">
    <location>
        <position position="35"/>
    </location>
    <ligand>
        <name>Mn(2+)</name>
        <dbReference type="ChEBI" id="CHEBI:29035"/>
        <label>1</label>
    </ligand>
</feature>
<feature type="binding site" evidence="1">
    <location>
        <position position="57"/>
    </location>
    <ligand>
        <name>Ca(2+)</name>
        <dbReference type="ChEBI" id="CHEBI:29108"/>
    </ligand>
</feature>
<feature type="binding site" evidence="1">
    <location>
        <position position="61"/>
    </location>
    <ligand>
        <name>Ca(2+)</name>
        <dbReference type="ChEBI" id="CHEBI:29108"/>
    </ligand>
</feature>
<feature type="binding site" evidence="1">
    <location>
        <position position="66"/>
    </location>
    <ligand>
        <name>Mn(2+)</name>
        <dbReference type="ChEBI" id="CHEBI:29035"/>
        <label>1</label>
    </ligand>
</feature>
<feature type="binding site" evidence="1">
    <location>
        <position position="66"/>
    </location>
    <ligand>
        <name>Mn(2+)</name>
        <dbReference type="ChEBI" id="CHEBI:29035"/>
        <label>2</label>
    </ligand>
</feature>
<feature type="binding site" evidence="1">
    <location>
        <position position="69"/>
    </location>
    <ligand>
        <name>Mn(2+)</name>
        <dbReference type="ChEBI" id="CHEBI:29035"/>
        <label>1</label>
    </ligand>
</feature>
<feature type="binding site" evidence="1">
    <location>
        <position position="149"/>
    </location>
    <ligand>
        <name>Mn(2+)</name>
        <dbReference type="ChEBI" id="CHEBI:29035"/>
        <label>2</label>
    </ligand>
</feature>
<feature type="binding site" evidence="1">
    <location>
        <position position="182"/>
    </location>
    <ligand>
        <name>Mn(2+)</name>
        <dbReference type="ChEBI" id="CHEBI:29035"/>
        <label>2</label>
    </ligand>
</feature>
<feature type="binding site" evidence="1">
    <location>
        <position position="220"/>
    </location>
    <ligand>
        <name>Ca(2+)</name>
        <dbReference type="ChEBI" id="CHEBI:29108"/>
    </ligand>
</feature>
<feature type="binding site" evidence="1">
    <location>
        <position position="222"/>
    </location>
    <ligand>
        <name>Ca(2+)</name>
        <dbReference type="ChEBI" id="CHEBI:29108"/>
    </ligand>
</feature>
<feature type="binding site" evidence="1">
    <location>
        <position position="224"/>
    </location>
    <ligand>
        <name>Ca(2+)</name>
        <dbReference type="ChEBI" id="CHEBI:29108"/>
    </ligand>
</feature>
<gene>
    <name evidence="4" type="primary">CatBsu</name>
</gene>
<name>MCAT_BACIU</name>
<proteinExistence type="evidence at protein level"/>
<dbReference type="EC" id="1.11.1.6" evidence="3"/>
<dbReference type="EMBL" id="LC602265">
    <property type="protein sequence ID" value="BCR34229.1"/>
    <property type="molecule type" value="Genomic_DNA"/>
</dbReference>
<dbReference type="RefSeq" id="WP_015252781.1">
    <property type="nucleotide sequence ID" value="NZ_AP028964.1"/>
</dbReference>
<dbReference type="SMR" id="A0A7R7ZDZ6"/>
<dbReference type="GO" id="GO:0046872">
    <property type="term" value="F:metal ion binding"/>
    <property type="evidence" value="ECO:0007669"/>
    <property type="project" value="UniProtKB-KW"/>
</dbReference>
<dbReference type="GO" id="GO:0004601">
    <property type="term" value="F:peroxidase activity"/>
    <property type="evidence" value="ECO:0007669"/>
    <property type="project" value="UniProtKB-KW"/>
</dbReference>
<dbReference type="CDD" id="cd01051">
    <property type="entry name" value="Mn_catalase"/>
    <property type="match status" value="1"/>
</dbReference>
<dbReference type="Gene3D" id="1.20.1260.10">
    <property type="match status" value="1"/>
</dbReference>
<dbReference type="Gene3D" id="3.30.1530.10">
    <property type="entry name" value="manganese catalase, domain 2, chain A"/>
    <property type="match status" value="1"/>
</dbReference>
<dbReference type="InterPro" id="IPR012347">
    <property type="entry name" value="Ferritin-like"/>
</dbReference>
<dbReference type="InterPro" id="IPR009078">
    <property type="entry name" value="Ferritin-like_SF"/>
</dbReference>
<dbReference type="InterPro" id="IPR007760">
    <property type="entry name" value="Mn_catalase"/>
</dbReference>
<dbReference type="InterPro" id="IPR027407">
    <property type="entry name" value="Mn_catalase_C"/>
</dbReference>
<dbReference type="InterPro" id="IPR039377">
    <property type="entry name" value="Mn_catalase_dom"/>
</dbReference>
<dbReference type="Pfam" id="PF05067">
    <property type="entry name" value="Mn_catalase"/>
    <property type="match status" value="1"/>
</dbReference>
<dbReference type="SUPFAM" id="SSF47240">
    <property type="entry name" value="Ferritin-like"/>
    <property type="match status" value="1"/>
</dbReference>
<organism>
    <name type="scientific">Bacillus subtilis</name>
    <dbReference type="NCBI Taxonomy" id="1423"/>
    <lineage>
        <taxon>Bacteria</taxon>
        <taxon>Bacillati</taxon>
        <taxon>Bacillota</taxon>
        <taxon>Bacilli</taxon>
        <taxon>Bacillales</taxon>
        <taxon>Bacillaceae</taxon>
        <taxon>Bacillus</taxon>
    </lineage>
</organism>
<accession>A0A7R7ZDZ6</accession>
<keyword id="KW-0106">Calcium</keyword>
<keyword id="KW-0464">Manganese</keyword>
<keyword id="KW-0479">Metal-binding</keyword>
<keyword id="KW-0560">Oxidoreductase</keyword>
<keyword id="KW-0575">Peroxidase</keyword>
<sequence>MFKHTKMLQHPAKPDRPDPLFAKKMQEILGGQFGEISVAMQYLFQGWNTRGNEKYKDLLMDTATEELGHVEMIATMIARLLEDAPLDQQEKAAEDPVIGSILGGMNPHHAIVSGLGAMPESSTGVPWSGGYIVASGNLLADFRANLNAESQGRLQVARLFEMTDDKGVKDMLSFLLARDTMHQNQWLAAIKELEAQEGPVVPGTFPKALEKQEFSHQLINFSEGEESAKQNWLNEKAPDGEAFEYVKEAKTFGEKPELKPAPPCVHNTLPGRE</sequence>